<organism>
    <name type="scientific">Saccharomyces cerevisiae (strain ATCC 204508 / S288c)</name>
    <name type="common">Baker's yeast</name>
    <dbReference type="NCBI Taxonomy" id="559292"/>
    <lineage>
        <taxon>Eukaryota</taxon>
        <taxon>Fungi</taxon>
        <taxon>Dikarya</taxon>
        <taxon>Ascomycota</taxon>
        <taxon>Saccharomycotina</taxon>
        <taxon>Saccharomycetes</taxon>
        <taxon>Saccharomycetales</taxon>
        <taxon>Saccharomycetaceae</taxon>
        <taxon>Saccharomyces</taxon>
    </lineage>
</organism>
<comment type="function">
    <text evidence="5">Functions in the SND pathway, a SRP (signal recognition particle) and GET (guided entry of tail-anchored proteins) independent pathway for targeting a broad range of substrate proteins to the endoplasmic reticulum. SND functions in parallel to GET in targeting proteins with downstream hydrophobic motifs.</text>
</comment>
<comment type="subunit">
    <text evidence="5">Interacts with ENV10/SND2.</text>
</comment>
<comment type="subcellular location">
    <subcellularLocation>
        <location evidence="3 5">Cytoplasm</location>
    </subcellularLocation>
</comment>
<comment type="miscellaneous">
    <text evidence="4">Present with 195 molecules/cell in log phase SD medium.</text>
</comment>
<feature type="chain" id="PRO_0000253835" description="SRP-independent targeting protein 1">
    <location>
        <begin position="1"/>
        <end position="877"/>
    </location>
</feature>
<feature type="region of interest" description="Disordered" evidence="2">
    <location>
        <begin position="369"/>
        <end position="414"/>
    </location>
</feature>
<feature type="region of interest" description="Disordered" evidence="2">
    <location>
        <begin position="446"/>
        <end position="521"/>
    </location>
</feature>
<feature type="region of interest" description="Disordered" evidence="2">
    <location>
        <begin position="550"/>
        <end position="579"/>
    </location>
</feature>
<feature type="region of interest" description="Disordered" evidence="2">
    <location>
        <begin position="773"/>
        <end position="815"/>
    </location>
</feature>
<feature type="coiled-coil region" evidence="1">
    <location>
        <begin position="412"/>
        <end position="441"/>
    </location>
</feature>
<feature type="compositionally biased region" description="Low complexity" evidence="2">
    <location>
        <begin position="389"/>
        <end position="402"/>
    </location>
</feature>
<feature type="compositionally biased region" description="Basic and acidic residues" evidence="2">
    <location>
        <begin position="447"/>
        <end position="462"/>
    </location>
</feature>
<feature type="compositionally biased region" description="Acidic residues" evidence="2">
    <location>
        <begin position="470"/>
        <end position="501"/>
    </location>
</feature>
<feature type="compositionally biased region" description="Polar residues" evidence="2">
    <location>
        <begin position="510"/>
        <end position="521"/>
    </location>
</feature>
<feature type="compositionally biased region" description="Polar residues" evidence="2">
    <location>
        <begin position="551"/>
        <end position="579"/>
    </location>
</feature>
<feature type="compositionally biased region" description="Low complexity" evidence="2">
    <location>
        <begin position="805"/>
        <end position="815"/>
    </location>
</feature>
<feature type="modified residue" description="Phosphoserine" evidence="12">
    <location>
        <position position="309"/>
    </location>
</feature>
<feature type="modified residue" description="Phosphoserine" evidence="12">
    <location>
        <position position="310"/>
    </location>
</feature>
<feature type="modified residue" description="Phosphoserine" evidence="12">
    <location>
        <position position="311"/>
    </location>
</feature>
<feature type="modified residue" description="Phosphoserine" evidence="9">
    <location>
        <position position="332"/>
    </location>
</feature>
<feature type="modified residue" description="Phosphoserine" evidence="9">
    <location>
        <position position="334"/>
    </location>
</feature>
<feature type="modified residue" description="Phosphoserine" evidence="10 11 12">
    <location>
        <position position="692"/>
    </location>
</feature>
<feature type="modified residue" description="Phosphoserine" evidence="12">
    <location>
        <position position="694"/>
    </location>
</feature>
<feature type="modified residue" description="Phosphoserine" evidence="8 10 11 12">
    <location>
        <position position="706"/>
    </location>
</feature>
<feature type="modified residue" description="Phosphoserine" evidence="11">
    <location>
        <position position="841"/>
    </location>
</feature>
<feature type="cross-link" description="Glycyl lysine isopeptide (Lys-Gly) (interchain with G-Cter in ubiquitin)" evidence="13">
    <location>
        <position position="668"/>
    </location>
</feature>
<feature type="cross-link" description="Glycyl lysine isopeptide (Lys-Gly) (interchain with G-Cter in ubiquitin)" evidence="13">
    <location>
        <position position="670"/>
    </location>
</feature>
<reference key="1">
    <citation type="journal article" date="1997" name="Nature">
        <title>The nucleotide sequence of Saccharomyces cerevisiae chromosome IV.</title>
        <authorList>
            <person name="Jacq C."/>
            <person name="Alt-Moerbe J."/>
            <person name="Andre B."/>
            <person name="Arnold W."/>
            <person name="Bahr A."/>
            <person name="Ballesta J.P.G."/>
            <person name="Bargues M."/>
            <person name="Baron L."/>
            <person name="Becker A."/>
            <person name="Biteau N."/>
            <person name="Bloecker H."/>
            <person name="Blugeon C."/>
            <person name="Boskovic J."/>
            <person name="Brandt P."/>
            <person name="Brueckner M."/>
            <person name="Buitrago M.J."/>
            <person name="Coster F."/>
            <person name="Delaveau T."/>
            <person name="del Rey F."/>
            <person name="Dujon B."/>
            <person name="Eide L.G."/>
            <person name="Garcia-Cantalejo J.M."/>
            <person name="Goffeau A."/>
            <person name="Gomez-Peris A."/>
            <person name="Granotier C."/>
            <person name="Hanemann V."/>
            <person name="Hankeln T."/>
            <person name="Hoheisel J.D."/>
            <person name="Jaeger W."/>
            <person name="Jimenez A."/>
            <person name="Jonniaux J.-L."/>
            <person name="Kraemer C."/>
            <person name="Kuester H."/>
            <person name="Laamanen P."/>
            <person name="Legros Y."/>
            <person name="Louis E.J."/>
            <person name="Moeller-Rieker S."/>
            <person name="Monnet A."/>
            <person name="Moro M."/>
            <person name="Mueller-Auer S."/>
            <person name="Nussbaumer B."/>
            <person name="Paricio N."/>
            <person name="Paulin L."/>
            <person name="Perea J."/>
            <person name="Perez-Alonso M."/>
            <person name="Perez-Ortin J.E."/>
            <person name="Pohl T.M."/>
            <person name="Prydz H."/>
            <person name="Purnelle B."/>
            <person name="Rasmussen S.W."/>
            <person name="Remacha M.A."/>
            <person name="Revuelta J.L."/>
            <person name="Rieger M."/>
            <person name="Salom D."/>
            <person name="Saluz H.P."/>
            <person name="Saiz J.E."/>
            <person name="Saren A.-M."/>
            <person name="Schaefer M."/>
            <person name="Scharfe M."/>
            <person name="Schmidt E.R."/>
            <person name="Schneider C."/>
            <person name="Scholler P."/>
            <person name="Schwarz S."/>
            <person name="Soler-Mira A."/>
            <person name="Urrestarazu L.A."/>
            <person name="Verhasselt P."/>
            <person name="Vissers S."/>
            <person name="Voet M."/>
            <person name="Volckaert G."/>
            <person name="Wagner G."/>
            <person name="Wambutt R."/>
            <person name="Wedler E."/>
            <person name="Wedler H."/>
            <person name="Woelfl S."/>
            <person name="Harris D.E."/>
            <person name="Bowman S."/>
            <person name="Brown D."/>
            <person name="Churcher C.M."/>
            <person name="Connor R."/>
            <person name="Dedman K."/>
            <person name="Gentles S."/>
            <person name="Hamlin N."/>
            <person name="Hunt S."/>
            <person name="Jones L."/>
            <person name="McDonald S."/>
            <person name="Murphy L.D."/>
            <person name="Niblett D."/>
            <person name="Odell C."/>
            <person name="Oliver K."/>
            <person name="Rajandream M.A."/>
            <person name="Richards C."/>
            <person name="Shore L."/>
            <person name="Walsh S.V."/>
            <person name="Barrell B.G."/>
            <person name="Dietrich F.S."/>
            <person name="Mulligan J.T."/>
            <person name="Allen E."/>
            <person name="Araujo R."/>
            <person name="Aviles E."/>
            <person name="Berno A."/>
            <person name="Carpenter J."/>
            <person name="Chen E."/>
            <person name="Cherry J.M."/>
            <person name="Chung E."/>
            <person name="Duncan M."/>
            <person name="Hunicke-Smith S."/>
            <person name="Hyman R.W."/>
            <person name="Komp C."/>
            <person name="Lashkari D."/>
            <person name="Lew H."/>
            <person name="Lin D."/>
            <person name="Mosedale D."/>
            <person name="Nakahara K."/>
            <person name="Namath A."/>
            <person name="Oefner P."/>
            <person name="Oh C."/>
            <person name="Petel F.X."/>
            <person name="Roberts D."/>
            <person name="Schramm S."/>
            <person name="Schroeder M."/>
            <person name="Shogren T."/>
            <person name="Shroff N."/>
            <person name="Winant A."/>
            <person name="Yelton M.A."/>
            <person name="Botstein D."/>
            <person name="Davis R.W."/>
            <person name="Johnston M."/>
            <person name="Andrews S."/>
            <person name="Brinkman R."/>
            <person name="Cooper J."/>
            <person name="Ding H."/>
            <person name="Du Z."/>
            <person name="Favello A."/>
            <person name="Fulton L."/>
            <person name="Gattung S."/>
            <person name="Greco T."/>
            <person name="Hallsworth K."/>
            <person name="Hawkins J."/>
            <person name="Hillier L.W."/>
            <person name="Jier M."/>
            <person name="Johnson D."/>
            <person name="Johnston L."/>
            <person name="Kirsten J."/>
            <person name="Kucaba T."/>
            <person name="Langston Y."/>
            <person name="Latreille P."/>
            <person name="Le T."/>
            <person name="Mardis E."/>
            <person name="Menezes S."/>
            <person name="Miller N."/>
            <person name="Nhan M."/>
            <person name="Pauley A."/>
            <person name="Peluso D."/>
            <person name="Rifkin L."/>
            <person name="Riles L."/>
            <person name="Taich A."/>
            <person name="Trevaskis E."/>
            <person name="Vignati D."/>
            <person name="Wilcox L."/>
            <person name="Wohldman P."/>
            <person name="Vaudin M."/>
            <person name="Wilson R."/>
            <person name="Waterston R."/>
            <person name="Albermann K."/>
            <person name="Hani J."/>
            <person name="Heumann K."/>
            <person name="Kleine K."/>
            <person name="Mewes H.-W."/>
            <person name="Zollner A."/>
            <person name="Zaccaria P."/>
        </authorList>
    </citation>
    <scope>NUCLEOTIDE SEQUENCE [LARGE SCALE GENOMIC DNA]</scope>
    <source>
        <strain>ATCC 204508 / S288c</strain>
    </source>
</reference>
<reference key="2">
    <citation type="journal article" date="2014" name="G3 (Bethesda)">
        <title>The reference genome sequence of Saccharomyces cerevisiae: Then and now.</title>
        <authorList>
            <person name="Engel S.R."/>
            <person name="Dietrich F.S."/>
            <person name="Fisk D.G."/>
            <person name="Binkley G."/>
            <person name="Balakrishnan R."/>
            <person name="Costanzo M.C."/>
            <person name="Dwight S.S."/>
            <person name="Hitz B.C."/>
            <person name="Karra K."/>
            <person name="Nash R.S."/>
            <person name="Weng S."/>
            <person name="Wong E.D."/>
            <person name="Lloyd P."/>
            <person name="Skrzypek M.S."/>
            <person name="Miyasato S.R."/>
            <person name="Simison M."/>
            <person name="Cherry J.M."/>
        </authorList>
    </citation>
    <scope>GENOME REANNOTATION</scope>
    <source>
        <strain>ATCC 204508 / S288c</strain>
    </source>
</reference>
<reference key="3">
    <citation type="journal article" date="2003" name="Nature">
        <title>Global analysis of protein localization in budding yeast.</title>
        <authorList>
            <person name="Huh W.-K."/>
            <person name="Falvo J.V."/>
            <person name="Gerke L.C."/>
            <person name="Carroll A.S."/>
            <person name="Howson R.W."/>
            <person name="Weissman J.S."/>
            <person name="O'Shea E.K."/>
        </authorList>
    </citation>
    <scope>SUBCELLULAR LOCATION [LARGE SCALE ANALYSIS]</scope>
</reference>
<reference key="4">
    <citation type="journal article" date="2003" name="Nature">
        <title>Global analysis of protein expression in yeast.</title>
        <authorList>
            <person name="Ghaemmaghami S."/>
            <person name="Huh W.-K."/>
            <person name="Bower K."/>
            <person name="Howson R.W."/>
            <person name="Belle A."/>
            <person name="Dephoure N."/>
            <person name="O'Shea E.K."/>
            <person name="Weissman J.S."/>
        </authorList>
    </citation>
    <scope>LEVEL OF PROTEIN EXPRESSION [LARGE SCALE ANALYSIS]</scope>
</reference>
<reference key="5">
    <citation type="journal article" date="2005" name="Mol. Cell. Proteomics">
        <title>Quantitative phosphoproteomics applied to the yeast pheromone signaling pathway.</title>
        <authorList>
            <person name="Gruhler A."/>
            <person name="Olsen J.V."/>
            <person name="Mohammed S."/>
            <person name="Mortensen P."/>
            <person name="Faergeman N.J."/>
            <person name="Mann M."/>
            <person name="Jensen O.N."/>
        </authorList>
    </citation>
    <scope>PHOSPHORYLATION [LARGE SCALE ANALYSIS] AT SER-706</scope>
    <scope>IDENTIFICATION BY MASS SPECTROMETRY [LARGE SCALE ANALYSIS]</scope>
    <source>
        <strain>YAL6B</strain>
    </source>
</reference>
<reference key="6">
    <citation type="journal article" date="2007" name="J. Proteome Res.">
        <title>Large-scale phosphorylation analysis of alpha-factor-arrested Saccharomyces cerevisiae.</title>
        <authorList>
            <person name="Li X."/>
            <person name="Gerber S.A."/>
            <person name="Rudner A.D."/>
            <person name="Beausoleil S.A."/>
            <person name="Haas W."/>
            <person name="Villen J."/>
            <person name="Elias J.E."/>
            <person name="Gygi S.P."/>
        </authorList>
    </citation>
    <scope>PHOSPHORYLATION [LARGE SCALE ANALYSIS] AT SER-692 AND SER-706</scope>
    <scope>IDENTIFICATION BY MASS SPECTROMETRY [LARGE SCALE ANALYSIS]</scope>
    <source>
        <strain>ADR376</strain>
    </source>
</reference>
<reference key="7">
    <citation type="journal article" date="2007" name="Proc. Natl. Acad. Sci. U.S.A.">
        <title>Analysis of phosphorylation sites on proteins from Saccharomyces cerevisiae by electron transfer dissociation (ETD) mass spectrometry.</title>
        <authorList>
            <person name="Chi A."/>
            <person name="Huttenhower C."/>
            <person name="Geer L.Y."/>
            <person name="Coon J.J."/>
            <person name="Syka J.E.P."/>
            <person name="Bai D.L."/>
            <person name="Shabanowitz J."/>
            <person name="Burke D.J."/>
            <person name="Troyanskaya O.G."/>
            <person name="Hunt D.F."/>
        </authorList>
    </citation>
    <scope>PHOSPHORYLATION [LARGE SCALE ANALYSIS] AT SER-332 AND SER-334</scope>
    <scope>IDENTIFICATION BY MASS SPECTROMETRY [LARGE SCALE ANALYSIS]</scope>
</reference>
<reference key="8">
    <citation type="journal article" date="2008" name="Mol. Cell. Proteomics">
        <title>A multidimensional chromatography technology for in-depth phosphoproteome analysis.</title>
        <authorList>
            <person name="Albuquerque C.P."/>
            <person name="Smolka M.B."/>
            <person name="Payne S.H."/>
            <person name="Bafna V."/>
            <person name="Eng J."/>
            <person name="Zhou H."/>
        </authorList>
    </citation>
    <scope>PHOSPHORYLATION [LARGE SCALE ANALYSIS] AT SER-692; SER-706 AND SER-841</scope>
    <scope>IDENTIFICATION BY MASS SPECTROMETRY [LARGE SCALE ANALYSIS]</scope>
</reference>
<reference key="9">
    <citation type="journal article" date="2009" name="Science">
        <title>Global analysis of Cdk1 substrate phosphorylation sites provides insights into evolution.</title>
        <authorList>
            <person name="Holt L.J."/>
            <person name="Tuch B.B."/>
            <person name="Villen J."/>
            <person name="Johnson A.D."/>
            <person name="Gygi S.P."/>
            <person name="Morgan D.O."/>
        </authorList>
    </citation>
    <scope>PHOSPHORYLATION [LARGE SCALE ANALYSIS] AT SER-309; SER-310; SER-311; SER-692; SER-694 AND SER-706</scope>
    <scope>IDENTIFICATION BY MASS SPECTROMETRY [LARGE SCALE ANALYSIS]</scope>
</reference>
<reference key="10">
    <citation type="journal article" date="2012" name="Proc. Natl. Acad. Sci. U.S.A.">
        <title>N-terminal acetylome analyses and functional insights of the N-terminal acetyltransferase NatB.</title>
        <authorList>
            <person name="Van Damme P."/>
            <person name="Lasa M."/>
            <person name="Polevoda B."/>
            <person name="Gazquez C."/>
            <person name="Elosegui-Artola A."/>
            <person name="Kim D.S."/>
            <person name="De Juan-Pardo E."/>
            <person name="Demeyer K."/>
            <person name="Hole K."/>
            <person name="Larrea E."/>
            <person name="Timmerman E."/>
            <person name="Prieto J."/>
            <person name="Arnesen T."/>
            <person name="Sherman F."/>
            <person name="Gevaert K."/>
            <person name="Aldabe R."/>
        </authorList>
    </citation>
    <scope>IDENTIFICATION BY MASS SPECTROMETRY [LARGE SCALE ANALYSIS]</scope>
</reference>
<reference key="11">
    <citation type="journal article" date="2012" name="Proteomics">
        <title>Sites of ubiquitin attachment in Saccharomyces cerevisiae.</title>
        <authorList>
            <person name="Starita L.M."/>
            <person name="Lo R.S."/>
            <person name="Eng J.K."/>
            <person name="von Haller P.D."/>
            <person name="Fields S."/>
        </authorList>
    </citation>
    <scope>UBIQUITINATION [LARGE SCALE ANALYSIS] AT LYS-668 AND LYS-670</scope>
    <scope>IDENTIFICATION BY MASS SPECTROMETRY [LARGE SCALE ANALYSIS]</scope>
</reference>
<reference key="12">
    <citation type="journal article" date="2016" name="Nature">
        <title>The SND proteins constitute an alternative targeting route to the endoplasmic reticulum.</title>
        <authorList>
            <person name="Aviram N."/>
            <person name="Ast T."/>
            <person name="Costa E.A."/>
            <person name="Arakel E.C."/>
            <person name="Chuartzman S.G."/>
            <person name="Jan C.H."/>
            <person name="Hassdenteufel S."/>
            <person name="Dudek J."/>
            <person name="Jung M."/>
            <person name="Schorr S."/>
            <person name="Zimmermann R."/>
            <person name="Schwappach B."/>
            <person name="Weissman J.S."/>
            <person name="Schuldiner M."/>
        </authorList>
    </citation>
    <scope>FUNCTION</scope>
    <scope>SUBCELLULAR LOCATION</scope>
    <scope>INTERACTION WITH ENV10</scope>
</reference>
<keyword id="KW-0175">Coiled coil</keyword>
<keyword id="KW-0963">Cytoplasm</keyword>
<keyword id="KW-1017">Isopeptide bond</keyword>
<keyword id="KW-0597">Phosphoprotein</keyword>
<keyword id="KW-0653">Protein transport</keyword>
<keyword id="KW-1185">Reference proteome</keyword>
<keyword id="KW-0813">Transport</keyword>
<keyword id="KW-0832">Ubl conjugation</keyword>
<proteinExistence type="evidence at protein level"/>
<dbReference type="EMBL" id="Z46727">
    <property type="protein sequence ID" value="CAA86693.1"/>
    <property type="molecule type" value="Genomic_DNA"/>
</dbReference>
<dbReference type="EMBL" id="BK006938">
    <property type="protein sequence ID" value="DAA12030.1"/>
    <property type="molecule type" value="Genomic_DNA"/>
</dbReference>
<dbReference type="PIR" id="S49783">
    <property type="entry name" value="S49783"/>
</dbReference>
<dbReference type="RefSeq" id="NP_010472.3">
    <property type="nucleotide sequence ID" value="NM_001180494.3"/>
</dbReference>
<dbReference type="BioGRID" id="32240">
    <property type="interactions" value="249"/>
</dbReference>
<dbReference type="DIP" id="DIP-6821N"/>
<dbReference type="FunCoup" id="Q04007">
    <property type="interactions" value="95"/>
</dbReference>
<dbReference type="IntAct" id="Q04007">
    <property type="interactions" value="12"/>
</dbReference>
<dbReference type="MINT" id="Q04007"/>
<dbReference type="STRING" id="4932.YDR186C"/>
<dbReference type="TCDB" id="9.A.64.1.1">
    <property type="family name" value="the srp-independent targeting (snd) family"/>
</dbReference>
<dbReference type="iPTMnet" id="Q04007"/>
<dbReference type="PaxDb" id="4932-YDR186C"/>
<dbReference type="PeptideAtlas" id="Q04007"/>
<dbReference type="EnsemblFungi" id="YDR186C_mRNA">
    <property type="protein sequence ID" value="YDR186C"/>
    <property type="gene ID" value="YDR186C"/>
</dbReference>
<dbReference type="GeneID" id="851767"/>
<dbReference type="KEGG" id="sce:YDR186C"/>
<dbReference type="AGR" id="SGD:S000002594"/>
<dbReference type="SGD" id="S000002594">
    <property type="gene designation" value="SND1"/>
</dbReference>
<dbReference type="VEuPathDB" id="FungiDB:YDR186C"/>
<dbReference type="eggNOG" id="ENOG502QRGG">
    <property type="taxonomic scope" value="Eukaryota"/>
</dbReference>
<dbReference type="HOGENOM" id="CLU_018066_0_0_1"/>
<dbReference type="InParanoid" id="Q04007"/>
<dbReference type="OMA" id="NIYIHDG"/>
<dbReference type="OrthoDB" id="4070605at2759"/>
<dbReference type="BioCyc" id="YEAST:G3O-29775-MONOMER"/>
<dbReference type="BioGRID-ORCS" id="851767">
    <property type="hits" value="5 hits in 10 CRISPR screens"/>
</dbReference>
<dbReference type="PRO" id="PR:Q04007"/>
<dbReference type="Proteomes" id="UP000002311">
    <property type="component" value="Chromosome IV"/>
</dbReference>
<dbReference type="RNAct" id="Q04007">
    <property type="molecule type" value="protein"/>
</dbReference>
<dbReference type="GO" id="GO:0005737">
    <property type="term" value="C:cytoplasm"/>
    <property type="evidence" value="ECO:0007005"/>
    <property type="project" value="SGD"/>
</dbReference>
<dbReference type="GO" id="GO:0015031">
    <property type="term" value="P:protein transport"/>
    <property type="evidence" value="ECO:0007669"/>
    <property type="project" value="UniProtKB-KW"/>
</dbReference>
<protein>
    <recommendedName>
        <fullName evidence="6">SRP-independent targeting protein 1</fullName>
    </recommendedName>
</protein>
<name>SND1_YEAST</name>
<sequence length="877" mass="98331">MDTVGTDAAAASINERRFAQSTSPKVSVKSQDSLFLITYSNMQQTVVQASLADRYPSLKKLNILLYIDIPTIDYYNDEMTHNKLSRLNKRFKLHRLRNSIAQSFSNTSTAEDNDKFWEELKSLISSRSTPENKFDLNVLVSSSGSLRYVETIRFLVEKLFNSFKDLYVQKKLNLCFQINVSPTSLKWFSTFLNAELLNLKIINWQNIGSFTKTIQNSKSLPFKEYYTKLNEKFTGSNQSNGSMQDQTVLDSIVIVTNSTGVKALLTLLSDHPLTSLISQESIKALHEYSDAVNEDKGDDQSNTSLKRNSSSLLNFQNSVLTSNKDKSVRIRSLSINRKSNRAHMFKTNESITTIPSTSINNLIGQESNLRKQPSGTALHLQSHLHPHSRSQSYSSSNMSRSPSPFPYGKTPSNDELVYDELNNQINEVQDRAKNEEIVLYNNNNYDDYTKERGEQEQDRTSYADEYGFNYDDEEGGNEDNYDDDEDDDDDDDDDDESDDEGLSFYAPSILSRSGSSTDVLSSGIDSMAKNSKETRGRFRSLSLMDPALQKPFNQKFPNSQQPDSAGASSPKRSTSSNHFTNVYVHDGDFDGTDTINNKKNLSSATLIKRKSLMNRNLAPSISNGLIPPEFISRISTPSTSASSSNSSLNDMSTVSNAFSKLLNDTSKKQKFLNSPIPQHTQQASPLLMRNNSNSNLLFEKNLINKSFEELRRQPSVNLFSTLMNGNMEKNGLALNFKSRTPTDALMANSIKNSNNSSHRLLNLEEEDQIMSGSLPKEREDDNDSTNSTIVPNHPDNDNYNDNDNDNNTGINSNNFNLNLYDDNDSAGFTDVTTEGVKYSNSNSTVTKPVYKKAVTLDLYGEDDMDNMGGWVLGGNAR</sequence>
<gene>
    <name evidence="6" type="primary">SND1</name>
    <name evidence="7" type="ordered locus">YDR186C</name>
</gene>
<evidence type="ECO:0000255" key="1"/>
<evidence type="ECO:0000256" key="2">
    <source>
        <dbReference type="SAM" id="MobiDB-lite"/>
    </source>
</evidence>
<evidence type="ECO:0000269" key="3">
    <source>
    </source>
</evidence>
<evidence type="ECO:0000269" key="4">
    <source>
    </source>
</evidence>
<evidence type="ECO:0000269" key="5">
    <source>
    </source>
</evidence>
<evidence type="ECO:0000303" key="6">
    <source>
    </source>
</evidence>
<evidence type="ECO:0000312" key="7">
    <source>
        <dbReference type="SGD" id="S000002594"/>
    </source>
</evidence>
<evidence type="ECO:0007744" key="8">
    <source>
    </source>
</evidence>
<evidence type="ECO:0007744" key="9">
    <source>
    </source>
</evidence>
<evidence type="ECO:0007744" key="10">
    <source>
    </source>
</evidence>
<evidence type="ECO:0007744" key="11">
    <source>
    </source>
</evidence>
<evidence type="ECO:0007744" key="12">
    <source>
    </source>
</evidence>
<evidence type="ECO:0007744" key="13">
    <source>
    </source>
</evidence>
<accession>Q04007</accession>
<accession>D6VSH0</accession>